<keyword id="KW-0274">FAD</keyword>
<keyword id="KW-0285">Flavoprotein</keyword>
<keyword id="KW-0521">NADP</keyword>
<keyword id="KW-0560">Oxidoreductase</keyword>
<keyword id="KW-1185">Reference proteome</keyword>
<feature type="chain" id="PRO_0000364811" description="Ferredoxin--NADP reductase">
    <location>
        <begin position="1"/>
        <end position="342"/>
    </location>
</feature>
<feature type="binding site" evidence="1">
    <location>
        <position position="17"/>
    </location>
    <ligand>
        <name>FAD</name>
        <dbReference type="ChEBI" id="CHEBI:57692"/>
    </ligand>
</feature>
<feature type="binding site" evidence="1">
    <location>
        <position position="36"/>
    </location>
    <ligand>
        <name>FAD</name>
        <dbReference type="ChEBI" id="CHEBI:57692"/>
    </ligand>
</feature>
<feature type="binding site" evidence="1">
    <location>
        <position position="44"/>
    </location>
    <ligand>
        <name>FAD</name>
        <dbReference type="ChEBI" id="CHEBI:57692"/>
    </ligand>
</feature>
<feature type="binding site" evidence="1">
    <location>
        <position position="49"/>
    </location>
    <ligand>
        <name>FAD</name>
        <dbReference type="ChEBI" id="CHEBI:57692"/>
    </ligand>
</feature>
<feature type="binding site" evidence="1">
    <location>
        <position position="89"/>
    </location>
    <ligand>
        <name>FAD</name>
        <dbReference type="ChEBI" id="CHEBI:57692"/>
    </ligand>
</feature>
<feature type="binding site" evidence="1">
    <location>
        <position position="124"/>
    </location>
    <ligand>
        <name>FAD</name>
        <dbReference type="ChEBI" id="CHEBI:57692"/>
    </ligand>
</feature>
<feature type="binding site" evidence="1">
    <location>
        <position position="289"/>
    </location>
    <ligand>
        <name>FAD</name>
        <dbReference type="ChEBI" id="CHEBI:57692"/>
    </ligand>
</feature>
<feature type="binding site" evidence="1">
    <location>
        <position position="330"/>
    </location>
    <ligand>
        <name>FAD</name>
        <dbReference type="ChEBI" id="CHEBI:57692"/>
    </ligand>
</feature>
<sequence length="342" mass="36983">MSEAIKTDVLIIGAGPCGLFAVFELGLLDIKAHLIDILDKVGGQCAELYPEKPIYDIPGVPMVTGQGLTDQLMEQIKPFSPTFHLGEMVSNVEKIGDPGFRVTTDAGKVFECKVVVIAAGGGSFQPKRPPVPGIEAYEGTSVFYAVRKMEQFRGKNVVIVGGGDSALDWTLNLHPIAKRIALIHRRDDFRAAPHSVEQMRALVASGKMDLRIGQVTALEGTNGQLSAATIKGNDNAVETIPCEMMLPFFGLTMKLGPVADWGIALEHNLIPVETSAFETSVPGIFAIGDINTYPGKIKLILCGFHEGALMAQKAHRYVYPEKRLVFQYTTSSSSLQKKLGVN</sequence>
<protein>
    <recommendedName>
        <fullName evidence="1">Ferredoxin--NADP reductase</fullName>
        <shortName evidence="1">FNR</shortName>
        <shortName evidence="1">Fd-NADP(+) reductase</shortName>
        <ecNumber evidence="1">1.18.1.2</ecNumber>
    </recommendedName>
</protein>
<reference key="1">
    <citation type="journal article" date="2007" name="Science">
        <title>Legumes symbioses: absence of nod genes in photosynthetic bradyrhizobia.</title>
        <authorList>
            <person name="Giraud E."/>
            <person name="Moulin L."/>
            <person name="Vallenet D."/>
            <person name="Barbe V."/>
            <person name="Cytryn E."/>
            <person name="Avarre J.-C."/>
            <person name="Jaubert M."/>
            <person name="Simon D."/>
            <person name="Cartieaux F."/>
            <person name="Prin Y."/>
            <person name="Bena G."/>
            <person name="Hannibal L."/>
            <person name="Fardoux J."/>
            <person name="Kojadinovic M."/>
            <person name="Vuillet L."/>
            <person name="Lajus A."/>
            <person name="Cruveiller S."/>
            <person name="Rouy Z."/>
            <person name="Mangenot S."/>
            <person name="Segurens B."/>
            <person name="Dossat C."/>
            <person name="Franck W.L."/>
            <person name="Chang W.-S."/>
            <person name="Saunders E."/>
            <person name="Bruce D."/>
            <person name="Richardson P."/>
            <person name="Normand P."/>
            <person name="Dreyfus B."/>
            <person name="Pignol D."/>
            <person name="Stacey G."/>
            <person name="Emerich D."/>
            <person name="Vermeglio A."/>
            <person name="Medigue C."/>
            <person name="Sadowsky M."/>
        </authorList>
    </citation>
    <scope>NUCLEOTIDE SEQUENCE [LARGE SCALE GENOMIC DNA]</scope>
    <source>
        <strain>ORS 278</strain>
    </source>
</reference>
<name>FENR_BRASO</name>
<gene>
    <name type="ordered locus">BRADO5079</name>
</gene>
<accession>A4YXZ8</accession>
<proteinExistence type="inferred from homology"/>
<evidence type="ECO:0000255" key="1">
    <source>
        <dbReference type="HAMAP-Rule" id="MF_01685"/>
    </source>
</evidence>
<comment type="catalytic activity">
    <reaction evidence="1">
        <text>2 reduced [2Fe-2S]-[ferredoxin] + NADP(+) + H(+) = 2 oxidized [2Fe-2S]-[ferredoxin] + NADPH</text>
        <dbReference type="Rhea" id="RHEA:20125"/>
        <dbReference type="Rhea" id="RHEA-COMP:10000"/>
        <dbReference type="Rhea" id="RHEA-COMP:10001"/>
        <dbReference type="ChEBI" id="CHEBI:15378"/>
        <dbReference type="ChEBI" id="CHEBI:33737"/>
        <dbReference type="ChEBI" id="CHEBI:33738"/>
        <dbReference type="ChEBI" id="CHEBI:57783"/>
        <dbReference type="ChEBI" id="CHEBI:58349"/>
        <dbReference type="EC" id="1.18.1.2"/>
    </reaction>
</comment>
<comment type="cofactor">
    <cofactor evidence="1">
        <name>FAD</name>
        <dbReference type="ChEBI" id="CHEBI:57692"/>
    </cofactor>
    <text evidence="1">Binds 1 FAD per subunit.</text>
</comment>
<comment type="subunit">
    <text evidence="1">Homodimer.</text>
</comment>
<comment type="similarity">
    <text evidence="1">Belongs to the ferredoxin--NADP reductase type 2 family.</text>
</comment>
<organism>
    <name type="scientific">Bradyrhizobium sp. (strain ORS 278)</name>
    <dbReference type="NCBI Taxonomy" id="114615"/>
    <lineage>
        <taxon>Bacteria</taxon>
        <taxon>Pseudomonadati</taxon>
        <taxon>Pseudomonadota</taxon>
        <taxon>Alphaproteobacteria</taxon>
        <taxon>Hyphomicrobiales</taxon>
        <taxon>Nitrobacteraceae</taxon>
        <taxon>Bradyrhizobium</taxon>
    </lineage>
</organism>
<dbReference type="EC" id="1.18.1.2" evidence="1"/>
<dbReference type="EMBL" id="CU234118">
    <property type="protein sequence ID" value="CAL78774.1"/>
    <property type="molecule type" value="Genomic_DNA"/>
</dbReference>
<dbReference type="RefSeq" id="WP_012028713.1">
    <property type="nucleotide sequence ID" value="NC_009445.1"/>
</dbReference>
<dbReference type="SMR" id="A4YXZ8"/>
<dbReference type="STRING" id="114615.BRADO5079"/>
<dbReference type="KEGG" id="bra:BRADO5079"/>
<dbReference type="eggNOG" id="COG0492">
    <property type="taxonomic scope" value="Bacteria"/>
</dbReference>
<dbReference type="HOGENOM" id="CLU_031864_5_5_5"/>
<dbReference type="OrthoDB" id="9806179at2"/>
<dbReference type="Proteomes" id="UP000001994">
    <property type="component" value="Chromosome"/>
</dbReference>
<dbReference type="GO" id="GO:0004324">
    <property type="term" value="F:ferredoxin-NADP+ reductase activity"/>
    <property type="evidence" value="ECO:0007669"/>
    <property type="project" value="UniProtKB-UniRule"/>
</dbReference>
<dbReference type="GO" id="GO:0050660">
    <property type="term" value="F:flavin adenine dinucleotide binding"/>
    <property type="evidence" value="ECO:0007669"/>
    <property type="project" value="UniProtKB-UniRule"/>
</dbReference>
<dbReference type="GO" id="GO:0050661">
    <property type="term" value="F:NADP binding"/>
    <property type="evidence" value="ECO:0007669"/>
    <property type="project" value="UniProtKB-UniRule"/>
</dbReference>
<dbReference type="Gene3D" id="3.50.50.60">
    <property type="entry name" value="FAD/NAD(P)-binding domain"/>
    <property type="match status" value="2"/>
</dbReference>
<dbReference type="HAMAP" id="MF_01685">
    <property type="entry name" value="FENR2"/>
    <property type="match status" value="1"/>
</dbReference>
<dbReference type="InterPro" id="IPR036188">
    <property type="entry name" value="FAD/NAD-bd_sf"/>
</dbReference>
<dbReference type="InterPro" id="IPR023753">
    <property type="entry name" value="FAD/NAD-binding_dom"/>
</dbReference>
<dbReference type="InterPro" id="IPR022890">
    <property type="entry name" value="Fd--NADP_Rdtase_type_2"/>
</dbReference>
<dbReference type="InterPro" id="IPR050097">
    <property type="entry name" value="Ferredoxin-NADP_redctase_2"/>
</dbReference>
<dbReference type="PANTHER" id="PTHR48105">
    <property type="entry name" value="THIOREDOXIN REDUCTASE 1-RELATED-RELATED"/>
    <property type="match status" value="1"/>
</dbReference>
<dbReference type="Pfam" id="PF07992">
    <property type="entry name" value="Pyr_redox_2"/>
    <property type="match status" value="1"/>
</dbReference>
<dbReference type="PRINTS" id="PR00368">
    <property type="entry name" value="FADPNR"/>
</dbReference>
<dbReference type="PRINTS" id="PR00469">
    <property type="entry name" value="PNDRDTASEII"/>
</dbReference>
<dbReference type="SUPFAM" id="SSF51905">
    <property type="entry name" value="FAD/NAD(P)-binding domain"/>
    <property type="match status" value="1"/>
</dbReference>